<sequence length="225" mass="25125">MEQEICVIGFSGGQDSTTLAVWAKKRFKKVCLVGFDYAQKHSVELECAQKIASLLQLPYEIIPLDFLENITHSALFKNSNDLMGHSHAQNKDLPNSFVPNRNAIFITLLHSYAQKLGASNIALGVSQADFSGYPDCKEDFIKSIEHALNLGSNTAIKIVTPLMFLSKAQEFQMAKDLGVLDLIIKETHTCYQGERKILHAYGYGCDKCPACQLRKKGFEEFQAML</sequence>
<keyword id="KW-0067">ATP-binding</keyword>
<keyword id="KW-0436">Ligase</keyword>
<keyword id="KW-0479">Metal-binding</keyword>
<keyword id="KW-0547">Nucleotide-binding</keyword>
<keyword id="KW-0671">Queuosine biosynthesis</keyword>
<keyword id="KW-0862">Zinc</keyword>
<comment type="function">
    <text evidence="1">Catalyzes the ATP-dependent conversion of 7-carboxy-7-deazaguanine (CDG) to 7-cyano-7-deazaguanine (preQ(0)).</text>
</comment>
<comment type="catalytic activity">
    <reaction evidence="1">
        <text>7-carboxy-7-deazaguanine + NH4(+) + ATP = 7-cyano-7-deazaguanine + ADP + phosphate + H2O + H(+)</text>
        <dbReference type="Rhea" id="RHEA:27982"/>
        <dbReference type="ChEBI" id="CHEBI:15377"/>
        <dbReference type="ChEBI" id="CHEBI:15378"/>
        <dbReference type="ChEBI" id="CHEBI:28938"/>
        <dbReference type="ChEBI" id="CHEBI:30616"/>
        <dbReference type="ChEBI" id="CHEBI:43474"/>
        <dbReference type="ChEBI" id="CHEBI:45075"/>
        <dbReference type="ChEBI" id="CHEBI:61036"/>
        <dbReference type="ChEBI" id="CHEBI:456216"/>
        <dbReference type="EC" id="6.3.4.20"/>
    </reaction>
</comment>
<comment type="cofactor">
    <cofactor evidence="1">
        <name>Zn(2+)</name>
        <dbReference type="ChEBI" id="CHEBI:29105"/>
    </cofactor>
    <text evidence="1">Binds 1 zinc ion per subunit.</text>
</comment>
<comment type="pathway">
    <text evidence="1">Purine metabolism; 7-cyano-7-deazaguanine biosynthesis.</text>
</comment>
<comment type="similarity">
    <text evidence="1">Belongs to the QueC family.</text>
</comment>
<evidence type="ECO:0000255" key="1">
    <source>
        <dbReference type="HAMAP-Rule" id="MF_01633"/>
    </source>
</evidence>
<name>QUEC_HELPJ</name>
<proteinExistence type="inferred from homology"/>
<reference key="1">
    <citation type="journal article" date="1999" name="Nature">
        <title>Genomic sequence comparison of two unrelated isolates of the human gastric pathogen Helicobacter pylori.</title>
        <authorList>
            <person name="Alm R.A."/>
            <person name="Ling L.-S.L."/>
            <person name="Moir D.T."/>
            <person name="King B.L."/>
            <person name="Brown E.D."/>
            <person name="Doig P.C."/>
            <person name="Smith D.R."/>
            <person name="Noonan B."/>
            <person name="Guild B.C."/>
            <person name="deJonge B.L."/>
            <person name="Carmel G."/>
            <person name="Tummino P.J."/>
            <person name="Caruso A."/>
            <person name="Uria-Nickelsen M."/>
            <person name="Mills D.M."/>
            <person name="Ives C."/>
            <person name="Gibson R."/>
            <person name="Merberg D."/>
            <person name="Mills S.D."/>
            <person name="Jiang Q."/>
            <person name="Taylor D.E."/>
            <person name="Vovis G.F."/>
            <person name="Trust T.J."/>
        </authorList>
    </citation>
    <scope>NUCLEOTIDE SEQUENCE [LARGE SCALE GENOMIC DNA]</scope>
    <source>
        <strain>J99 / ATCC 700824</strain>
    </source>
</reference>
<feature type="chain" id="PRO_0000246853" description="7-cyano-7-deazaguanine synthase">
    <location>
        <begin position="1"/>
        <end position="225"/>
    </location>
</feature>
<feature type="binding site" evidence="1">
    <location>
        <begin position="10"/>
        <end position="20"/>
    </location>
    <ligand>
        <name>ATP</name>
        <dbReference type="ChEBI" id="CHEBI:30616"/>
    </ligand>
</feature>
<feature type="binding site" evidence="1">
    <location>
        <position position="190"/>
    </location>
    <ligand>
        <name>Zn(2+)</name>
        <dbReference type="ChEBI" id="CHEBI:29105"/>
    </ligand>
</feature>
<feature type="binding site" evidence="1">
    <location>
        <position position="205"/>
    </location>
    <ligand>
        <name>Zn(2+)</name>
        <dbReference type="ChEBI" id="CHEBI:29105"/>
    </ligand>
</feature>
<feature type="binding site" evidence="1">
    <location>
        <position position="208"/>
    </location>
    <ligand>
        <name>Zn(2+)</name>
        <dbReference type="ChEBI" id="CHEBI:29105"/>
    </ligand>
</feature>
<feature type="binding site" evidence="1">
    <location>
        <position position="211"/>
    </location>
    <ligand>
        <name>Zn(2+)</name>
        <dbReference type="ChEBI" id="CHEBI:29105"/>
    </ligand>
</feature>
<protein>
    <recommendedName>
        <fullName evidence="1">7-cyano-7-deazaguanine synthase</fullName>
        <ecNumber evidence="1">6.3.4.20</ecNumber>
    </recommendedName>
    <alternativeName>
        <fullName evidence="1">7-cyano-7-carbaguanine synthase</fullName>
    </alternativeName>
    <alternativeName>
        <fullName evidence="1">PreQ(0) synthase</fullName>
    </alternativeName>
    <alternativeName>
        <fullName evidence="1">Queuosine biosynthesis protein QueC</fullName>
    </alternativeName>
</protein>
<accession>Q9ZLJ7</accession>
<dbReference type="EC" id="6.3.4.20" evidence="1"/>
<dbReference type="EMBL" id="AE001439">
    <property type="protein sequence ID" value="AAD06173.1"/>
    <property type="molecule type" value="Genomic_DNA"/>
</dbReference>
<dbReference type="PIR" id="D71912">
    <property type="entry name" value="D71912"/>
</dbReference>
<dbReference type="RefSeq" id="WP_000434389.1">
    <property type="nucleotide sequence ID" value="NZ_CP011330.1"/>
</dbReference>
<dbReference type="SMR" id="Q9ZLJ7"/>
<dbReference type="KEGG" id="hpj:jhp_0582"/>
<dbReference type="PATRIC" id="fig|85963.30.peg.405"/>
<dbReference type="eggNOG" id="COG0603">
    <property type="taxonomic scope" value="Bacteria"/>
</dbReference>
<dbReference type="UniPathway" id="UPA00391"/>
<dbReference type="Proteomes" id="UP000000804">
    <property type="component" value="Chromosome"/>
</dbReference>
<dbReference type="GO" id="GO:0005524">
    <property type="term" value="F:ATP binding"/>
    <property type="evidence" value="ECO:0007669"/>
    <property type="project" value="UniProtKB-UniRule"/>
</dbReference>
<dbReference type="GO" id="GO:0016879">
    <property type="term" value="F:ligase activity, forming carbon-nitrogen bonds"/>
    <property type="evidence" value="ECO:0007669"/>
    <property type="project" value="UniProtKB-UniRule"/>
</dbReference>
<dbReference type="GO" id="GO:0008270">
    <property type="term" value="F:zinc ion binding"/>
    <property type="evidence" value="ECO:0007669"/>
    <property type="project" value="UniProtKB-UniRule"/>
</dbReference>
<dbReference type="GO" id="GO:0008616">
    <property type="term" value="P:queuosine biosynthetic process"/>
    <property type="evidence" value="ECO:0007669"/>
    <property type="project" value="UniProtKB-UniRule"/>
</dbReference>
<dbReference type="CDD" id="cd01995">
    <property type="entry name" value="QueC-like"/>
    <property type="match status" value="1"/>
</dbReference>
<dbReference type="FunFam" id="3.40.50.620:FF:000179">
    <property type="entry name" value="7-cyano-7-deazaguanine synthase"/>
    <property type="match status" value="1"/>
</dbReference>
<dbReference type="Gene3D" id="3.40.50.620">
    <property type="entry name" value="HUPs"/>
    <property type="match status" value="1"/>
</dbReference>
<dbReference type="HAMAP" id="MF_01633">
    <property type="entry name" value="QueC"/>
    <property type="match status" value="1"/>
</dbReference>
<dbReference type="InterPro" id="IPR018317">
    <property type="entry name" value="QueC"/>
</dbReference>
<dbReference type="InterPro" id="IPR014729">
    <property type="entry name" value="Rossmann-like_a/b/a_fold"/>
</dbReference>
<dbReference type="NCBIfam" id="TIGR00364">
    <property type="entry name" value="7-cyano-7-deazaguanine synthase QueC"/>
    <property type="match status" value="1"/>
</dbReference>
<dbReference type="PANTHER" id="PTHR42914">
    <property type="entry name" value="7-CYANO-7-DEAZAGUANINE SYNTHASE"/>
    <property type="match status" value="1"/>
</dbReference>
<dbReference type="PANTHER" id="PTHR42914:SF1">
    <property type="entry name" value="7-CYANO-7-DEAZAGUANINE SYNTHASE"/>
    <property type="match status" value="1"/>
</dbReference>
<dbReference type="Pfam" id="PF06508">
    <property type="entry name" value="QueC"/>
    <property type="match status" value="1"/>
</dbReference>
<dbReference type="PIRSF" id="PIRSF006293">
    <property type="entry name" value="ExsB"/>
    <property type="match status" value="1"/>
</dbReference>
<dbReference type="SUPFAM" id="SSF52402">
    <property type="entry name" value="Adenine nucleotide alpha hydrolases-like"/>
    <property type="match status" value="1"/>
</dbReference>
<gene>
    <name evidence="1" type="primary">queC</name>
    <name type="ordered locus">jhp_0582</name>
</gene>
<organism>
    <name type="scientific">Helicobacter pylori (strain J99 / ATCC 700824)</name>
    <name type="common">Campylobacter pylori J99</name>
    <dbReference type="NCBI Taxonomy" id="85963"/>
    <lineage>
        <taxon>Bacteria</taxon>
        <taxon>Pseudomonadati</taxon>
        <taxon>Campylobacterota</taxon>
        <taxon>Epsilonproteobacteria</taxon>
        <taxon>Campylobacterales</taxon>
        <taxon>Helicobacteraceae</taxon>
        <taxon>Helicobacter</taxon>
    </lineage>
</organism>